<organism>
    <name type="scientific">Anoxybacillus flavithermus (strain DSM 21510 / WK1)</name>
    <dbReference type="NCBI Taxonomy" id="491915"/>
    <lineage>
        <taxon>Bacteria</taxon>
        <taxon>Bacillati</taxon>
        <taxon>Bacillota</taxon>
        <taxon>Bacilli</taxon>
        <taxon>Bacillales</taxon>
        <taxon>Anoxybacillaceae</taxon>
        <taxon>Anoxybacillus</taxon>
    </lineage>
</organism>
<evidence type="ECO:0000255" key="1">
    <source>
        <dbReference type="HAMAP-Rule" id="MF_01633"/>
    </source>
</evidence>
<name>QUEC_ANOFW</name>
<comment type="function">
    <text evidence="1">Catalyzes the ATP-dependent conversion of 7-carboxy-7-deazaguanine (CDG) to 7-cyano-7-deazaguanine (preQ(0)).</text>
</comment>
<comment type="catalytic activity">
    <reaction evidence="1">
        <text>7-carboxy-7-deazaguanine + NH4(+) + ATP = 7-cyano-7-deazaguanine + ADP + phosphate + H2O + H(+)</text>
        <dbReference type="Rhea" id="RHEA:27982"/>
        <dbReference type="ChEBI" id="CHEBI:15377"/>
        <dbReference type="ChEBI" id="CHEBI:15378"/>
        <dbReference type="ChEBI" id="CHEBI:28938"/>
        <dbReference type="ChEBI" id="CHEBI:30616"/>
        <dbReference type="ChEBI" id="CHEBI:43474"/>
        <dbReference type="ChEBI" id="CHEBI:45075"/>
        <dbReference type="ChEBI" id="CHEBI:61036"/>
        <dbReference type="ChEBI" id="CHEBI:456216"/>
        <dbReference type="EC" id="6.3.4.20"/>
    </reaction>
</comment>
<comment type="cofactor">
    <cofactor evidence="1">
        <name>Zn(2+)</name>
        <dbReference type="ChEBI" id="CHEBI:29105"/>
    </cofactor>
    <text evidence="1">Binds 1 zinc ion per subunit.</text>
</comment>
<comment type="pathway">
    <text evidence="1">Purine metabolism; 7-cyano-7-deazaguanine biosynthesis.</text>
</comment>
<comment type="subunit">
    <text evidence="1">Homodimer.</text>
</comment>
<comment type="similarity">
    <text evidence="1">Belongs to the QueC family.</text>
</comment>
<reference key="1">
    <citation type="journal article" date="2008" name="Genome Biol.">
        <title>Encapsulated in silica: genome, proteome and physiology of the thermophilic bacterium Anoxybacillus flavithermus WK1.</title>
        <authorList>
            <person name="Saw J.H."/>
            <person name="Mountain B.W."/>
            <person name="Feng L."/>
            <person name="Omelchenko M.V."/>
            <person name="Hou S."/>
            <person name="Saito J.A."/>
            <person name="Stott M.B."/>
            <person name="Li D."/>
            <person name="Zhao G."/>
            <person name="Wu J."/>
            <person name="Galperin M.Y."/>
            <person name="Koonin E.V."/>
            <person name="Makarova K.S."/>
            <person name="Wolf Y.I."/>
            <person name="Rigden D.J."/>
            <person name="Dunfield P.F."/>
            <person name="Wang L."/>
            <person name="Alam M."/>
        </authorList>
    </citation>
    <scope>NUCLEOTIDE SEQUENCE [LARGE SCALE GENOMIC DNA]</scope>
    <source>
        <strain>DSM 21510 / WK1</strain>
    </source>
</reference>
<feature type="chain" id="PRO_1000186552" description="7-cyano-7-deazaguanine synthase">
    <location>
        <begin position="1"/>
        <end position="221"/>
    </location>
</feature>
<feature type="binding site" evidence="1">
    <location>
        <begin position="10"/>
        <end position="20"/>
    </location>
    <ligand>
        <name>ATP</name>
        <dbReference type="ChEBI" id="CHEBI:30616"/>
    </ligand>
</feature>
<feature type="binding site" evidence="1">
    <location>
        <position position="186"/>
    </location>
    <ligand>
        <name>Zn(2+)</name>
        <dbReference type="ChEBI" id="CHEBI:29105"/>
    </ligand>
</feature>
<feature type="binding site" evidence="1">
    <location>
        <position position="195"/>
    </location>
    <ligand>
        <name>Zn(2+)</name>
        <dbReference type="ChEBI" id="CHEBI:29105"/>
    </ligand>
</feature>
<feature type="binding site" evidence="1">
    <location>
        <position position="198"/>
    </location>
    <ligand>
        <name>Zn(2+)</name>
        <dbReference type="ChEBI" id="CHEBI:29105"/>
    </ligand>
</feature>
<feature type="binding site" evidence="1">
    <location>
        <position position="201"/>
    </location>
    <ligand>
        <name>Zn(2+)</name>
        <dbReference type="ChEBI" id="CHEBI:29105"/>
    </ligand>
</feature>
<keyword id="KW-0067">ATP-binding</keyword>
<keyword id="KW-0436">Ligase</keyword>
<keyword id="KW-0479">Metal-binding</keyword>
<keyword id="KW-0547">Nucleotide-binding</keyword>
<keyword id="KW-0671">Queuosine biosynthesis</keyword>
<keyword id="KW-0862">Zinc</keyword>
<proteinExistence type="inferred from homology"/>
<gene>
    <name evidence="1" type="primary">queC</name>
    <name type="ordered locus">Aflv_1971</name>
</gene>
<sequence length="221" mass="24703">MKKEKAVVVFSGGQDSTTCLFWAKKHFAEVEAVTFDYNQRHRLEIDVAASIAKELNVSHTVLDMSLLHQLAPNALTRSDIAIEQKEGQLPSTFVDGRNLLFLSFAAVLAKQKGARHLVTGVCETDFSGYPDCRDVFIKSLNVTLNLAMDYQFVIHTPLMWLNKAETWKLADELGALEFVRNKTLTCYNGIIADGCGECPACVLRKRGLDQYMNEKKGANVR</sequence>
<dbReference type="EC" id="6.3.4.20" evidence="1"/>
<dbReference type="EMBL" id="CP000922">
    <property type="protein sequence ID" value="ACJ34330.1"/>
    <property type="molecule type" value="Genomic_DNA"/>
</dbReference>
<dbReference type="RefSeq" id="WP_012575517.1">
    <property type="nucleotide sequence ID" value="NC_011567.1"/>
</dbReference>
<dbReference type="SMR" id="B7GLA4"/>
<dbReference type="STRING" id="491915.Aflv_1971"/>
<dbReference type="GeneID" id="7038223"/>
<dbReference type="KEGG" id="afl:Aflv_1971"/>
<dbReference type="PATRIC" id="fig|491915.6.peg.2024"/>
<dbReference type="eggNOG" id="COG0603">
    <property type="taxonomic scope" value="Bacteria"/>
</dbReference>
<dbReference type="HOGENOM" id="CLU_081854_0_0_9"/>
<dbReference type="UniPathway" id="UPA00391"/>
<dbReference type="Proteomes" id="UP000000742">
    <property type="component" value="Chromosome"/>
</dbReference>
<dbReference type="GO" id="GO:0005524">
    <property type="term" value="F:ATP binding"/>
    <property type="evidence" value="ECO:0007669"/>
    <property type="project" value="UniProtKB-UniRule"/>
</dbReference>
<dbReference type="GO" id="GO:0016879">
    <property type="term" value="F:ligase activity, forming carbon-nitrogen bonds"/>
    <property type="evidence" value="ECO:0007669"/>
    <property type="project" value="UniProtKB-UniRule"/>
</dbReference>
<dbReference type="GO" id="GO:0008270">
    <property type="term" value="F:zinc ion binding"/>
    <property type="evidence" value="ECO:0007669"/>
    <property type="project" value="UniProtKB-UniRule"/>
</dbReference>
<dbReference type="GO" id="GO:0008616">
    <property type="term" value="P:queuosine biosynthetic process"/>
    <property type="evidence" value="ECO:0007669"/>
    <property type="project" value="UniProtKB-UniRule"/>
</dbReference>
<dbReference type="CDD" id="cd01995">
    <property type="entry name" value="QueC-like"/>
    <property type="match status" value="1"/>
</dbReference>
<dbReference type="FunFam" id="3.40.50.620:FF:000017">
    <property type="entry name" value="7-cyano-7-deazaguanine synthase"/>
    <property type="match status" value="1"/>
</dbReference>
<dbReference type="Gene3D" id="3.40.50.620">
    <property type="entry name" value="HUPs"/>
    <property type="match status" value="1"/>
</dbReference>
<dbReference type="HAMAP" id="MF_01633">
    <property type="entry name" value="QueC"/>
    <property type="match status" value="1"/>
</dbReference>
<dbReference type="InterPro" id="IPR018317">
    <property type="entry name" value="QueC"/>
</dbReference>
<dbReference type="InterPro" id="IPR014729">
    <property type="entry name" value="Rossmann-like_a/b/a_fold"/>
</dbReference>
<dbReference type="NCBIfam" id="TIGR00364">
    <property type="entry name" value="7-cyano-7-deazaguanine synthase QueC"/>
    <property type="match status" value="1"/>
</dbReference>
<dbReference type="PANTHER" id="PTHR42914">
    <property type="entry name" value="7-CYANO-7-DEAZAGUANINE SYNTHASE"/>
    <property type="match status" value="1"/>
</dbReference>
<dbReference type="PANTHER" id="PTHR42914:SF1">
    <property type="entry name" value="7-CYANO-7-DEAZAGUANINE SYNTHASE"/>
    <property type="match status" value="1"/>
</dbReference>
<dbReference type="Pfam" id="PF06508">
    <property type="entry name" value="QueC"/>
    <property type="match status" value="1"/>
</dbReference>
<dbReference type="PIRSF" id="PIRSF006293">
    <property type="entry name" value="ExsB"/>
    <property type="match status" value="1"/>
</dbReference>
<dbReference type="SUPFAM" id="SSF52402">
    <property type="entry name" value="Adenine nucleotide alpha hydrolases-like"/>
    <property type="match status" value="1"/>
</dbReference>
<accession>B7GLA4</accession>
<protein>
    <recommendedName>
        <fullName evidence="1">7-cyano-7-deazaguanine synthase</fullName>
        <ecNumber evidence="1">6.3.4.20</ecNumber>
    </recommendedName>
    <alternativeName>
        <fullName evidence="1">7-cyano-7-carbaguanine synthase</fullName>
    </alternativeName>
    <alternativeName>
        <fullName evidence="1">PreQ(0) synthase</fullName>
    </alternativeName>
    <alternativeName>
        <fullName evidence="1">Queuosine biosynthesis protein QueC</fullName>
    </alternativeName>
</protein>